<reference key="1">
    <citation type="submission" date="2003-03" db="EMBL/GenBank/DDBJ databases">
        <title>African swine fever virus genomes.</title>
        <authorList>
            <person name="Kutish G.F."/>
            <person name="Rock D.L."/>
        </authorList>
    </citation>
    <scope>NUCLEOTIDE SEQUENCE [LARGE SCALE GENOMIC DNA]</scope>
</reference>
<keyword id="KW-1074">Activation of host NF-kappa-B by virus</keyword>
<keyword id="KW-1035">Host cytoplasm</keyword>
<keyword id="KW-0945">Host-virus interaction</keyword>
<keyword id="KW-1085">Inhibition of host caspases by virus</keyword>
<keyword id="KW-0479">Metal-binding</keyword>
<keyword id="KW-1119">Modulation of host cell apoptosis by virus</keyword>
<keyword id="KW-0946">Virion</keyword>
<keyword id="KW-0862">Zinc</keyword>
<keyword id="KW-0863">Zinc-finger</keyword>
<comment type="function">
    <text evidence="1">Prevents apoptosis of host cell by inhibiting caspase-3/CASP3 activation to promote the viral replication. Also induces the activation of host NF-kappaB.</text>
</comment>
<comment type="subunit">
    <text evidence="1">Interacts with subunit p17 of host CASP3.</text>
</comment>
<comment type="subcellular location">
    <subcellularLocation>
        <location evidence="1">Host cytoplasm</location>
    </subcellularLocation>
    <subcellularLocation>
        <location evidence="1">Virion</location>
    </subcellularLocation>
    <text>Probably accumulates in the cytoplasmic viral factories.</text>
</comment>
<comment type="induction">
    <text evidence="1">Expressed in the late phase of the viral replicative cycle.</text>
</comment>
<comment type="similarity">
    <text evidence="4">Belongs to the asfivirus IAP family.</text>
</comment>
<dbReference type="EMBL" id="AY261360">
    <property type="status" value="NOT_ANNOTATED_CDS"/>
    <property type="molecule type" value="Genomic_DNA"/>
</dbReference>
<dbReference type="SMR" id="P0C9X4"/>
<dbReference type="Proteomes" id="UP000000861">
    <property type="component" value="Segment"/>
</dbReference>
<dbReference type="GO" id="GO:0030430">
    <property type="term" value="C:host cell cytoplasm"/>
    <property type="evidence" value="ECO:0007669"/>
    <property type="project" value="UniProtKB-SubCell"/>
</dbReference>
<dbReference type="GO" id="GO:0044423">
    <property type="term" value="C:virion component"/>
    <property type="evidence" value="ECO:0007669"/>
    <property type="project" value="UniProtKB-KW"/>
</dbReference>
<dbReference type="GO" id="GO:0008270">
    <property type="term" value="F:zinc ion binding"/>
    <property type="evidence" value="ECO:0007669"/>
    <property type="project" value="UniProtKB-KW"/>
</dbReference>
<dbReference type="GO" id="GO:0085033">
    <property type="term" value="P:symbiont-mediated activation of host NF-kappaB cascade"/>
    <property type="evidence" value="ECO:0007669"/>
    <property type="project" value="UniProtKB-KW"/>
</dbReference>
<dbReference type="GO" id="GO:0033668">
    <property type="term" value="P:symbiont-mediated suppression of host apoptosis"/>
    <property type="evidence" value="ECO:0007669"/>
    <property type="project" value="UniProtKB-KW"/>
</dbReference>
<dbReference type="CDD" id="cd00022">
    <property type="entry name" value="BIR"/>
    <property type="match status" value="1"/>
</dbReference>
<dbReference type="Gene3D" id="1.10.1170.10">
    <property type="entry name" value="Inhibitor Of Apoptosis Protein (2mihbC-IAP-1), Chain A"/>
    <property type="match status" value="1"/>
</dbReference>
<dbReference type="InterPro" id="IPR010549">
    <property type="entry name" value="ASFV_p27_C"/>
</dbReference>
<dbReference type="InterPro" id="IPR001370">
    <property type="entry name" value="BIR_rpt"/>
</dbReference>
<dbReference type="Pfam" id="PF06556">
    <property type="entry name" value="ASFV_p27"/>
    <property type="match status" value="1"/>
</dbReference>
<dbReference type="Pfam" id="PF00653">
    <property type="entry name" value="BIR"/>
    <property type="match status" value="1"/>
</dbReference>
<dbReference type="SMART" id="SM00238">
    <property type="entry name" value="BIR"/>
    <property type="match status" value="1"/>
</dbReference>
<dbReference type="SUPFAM" id="SSF57924">
    <property type="entry name" value="Inhibitor of apoptosis (IAP) repeat"/>
    <property type="match status" value="1"/>
</dbReference>
<dbReference type="PROSITE" id="PS01282">
    <property type="entry name" value="BIR_REPEAT_1"/>
    <property type="match status" value="1"/>
</dbReference>
<dbReference type="PROSITE" id="PS50143">
    <property type="entry name" value="BIR_REPEAT_2"/>
    <property type="match status" value="1"/>
</dbReference>
<gene>
    <name type="ordered locus">Ken-046</name>
</gene>
<accession>P0C9X4</accession>
<feature type="chain" id="PRO_0000373380" description="Inhibitor of apoptosis protein">
    <location>
        <begin position="1"/>
        <end position="224"/>
    </location>
</feature>
<feature type="repeat" description="BIR" evidence="3">
    <location>
        <begin position="29"/>
        <end position="92"/>
    </location>
</feature>
<feature type="zinc finger region" description="C4-type" evidence="2">
    <location>
        <begin position="189"/>
        <end position="207"/>
    </location>
</feature>
<feature type="binding site" evidence="3">
    <location>
        <position position="62"/>
    </location>
    <ligand>
        <name>Zn(2+)</name>
        <dbReference type="ChEBI" id="CHEBI:29105"/>
    </ligand>
</feature>
<feature type="binding site" evidence="3">
    <location>
        <position position="65"/>
    </location>
    <ligand>
        <name>Zn(2+)</name>
        <dbReference type="ChEBI" id="CHEBI:29105"/>
    </ligand>
</feature>
<feature type="binding site" evidence="3">
    <location>
        <position position="82"/>
    </location>
    <ligand>
        <name>Zn(2+)</name>
        <dbReference type="ChEBI" id="CHEBI:29105"/>
    </ligand>
</feature>
<feature type="binding site" evidence="3">
    <location>
        <position position="89"/>
    </location>
    <ligand>
        <name>Zn(2+)</name>
        <dbReference type="ChEBI" id="CHEBI:29105"/>
    </ligand>
</feature>
<sequence length="224" mass="26692">MYPKINTIDTYISLRLFEVKPKYAGYSSVDARNKSFAIHDIKNYEKFSNAGLFYTSPTEITCYCCGMKFCNWLYEKHPLQVHGFWSRNCGFMRATLGIIGLKKMIDSYNDYFTHEVSVKHKNRVYTHKRLEDMGFSKCFMRFILANAFMPPYRKYIHKIILNERYFTFKFVAYLLSFHKVNLDNQTTYCMTCGIEQINKDENFCSACKTLNYKYYKMLNFSIKL</sequence>
<organismHost>
    <name type="scientific">Ornithodoros</name>
    <name type="common">relapsing fever ticks</name>
    <dbReference type="NCBI Taxonomy" id="6937"/>
</organismHost>
<organismHost>
    <name type="scientific">Phacochoerus aethiopicus</name>
    <name type="common">Warthog</name>
    <dbReference type="NCBI Taxonomy" id="85517"/>
</organismHost>
<organismHost>
    <name type="scientific">Phacochoerus africanus</name>
    <name type="common">Warthog</name>
    <dbReference type="NCBI Taxonomy" id="41426"/>
</organismHost>
<organismHost>
    <name type="scientific">Potamochoerus larvatus</name>
    <name type="common">Bushpig</name>
    <dbReference type="NCBI Taxonomy" id="273792"/>
</organismHost>
<organismHost>
    <name type="scientific">Sus scrofa</name>
    <name type="common">Pig</name>
    <dbReference type="NCBI Taxonomy" id="9823"/>
</organismHost>
<evidence type="ECO:0000250" key="1">
    <source>
        <dbReference type="UniProtKB" id="P69180"/>
    </source>
</evidence>
<evidence type="ECO:0000255" key="2"/>
<evidence type="ECO:0000255" key="3">
    <source>
        <dbReference type="PROSITE-ProRule" id="PRU00029"/>
    </source>
</evidence>
<evidence type="ECO:0000305" key="4"/>
<organism>
    <name type="scientific">African swine fever virus (isolate Pig/Kenya/KEN-50/1950)</name>
    <name type="common">ASFV</name>
    <dbReference type="NCBI Taxonomy" id="561445"/>
    <lineage>
        <taxon>Viruses</taxon>
        <taxon>Varidnaviria</taxon>
        <taxon>Bamfordvirae</taxon>
        <taxon>Nucleocytoviricota</taxon>
        <taxon>Pokkesviricetes</taxon>
        <taxon>Asfuvirales</taxon>
        <taxon>Asfarviridae</taxon>
        <taxon>Asfivirus</taxon>
        <taxon>African swine fever virus</taxon>
    </lineage>
</organism>
<name>IAP_ASFK5</name>
<proteinExistence type="inferred from homology"/>
<protein>
    <recommendedName>
        <fullName>Inhibitor of apoptosis protein</fullName>
        <shortName>IAP</shortName>
    </recommendedName>
</protein>